<accession>O48413</accession>
<sequence>MKKRYKVTALFEDGTSQCLVVGNFSSPTNAWCAAMRNLTPEGIARVQHYNVEEISK</sequence>
<proteinExistence type="predicted"/>
<organism>
    <name type="scientific">Bacillus phage SP01</name>
    <name type="common">Bacteriophage SP01</name>
    <dbReference type="NCBI Taxonomy" id="2884427"/>
    <lineage>
        <taxon>Viruses</taxon>
        <taxon>Duplodnaviria</taxon>
        <taxon>Heunggongvirae</taxon>
        <taxon>Uroviricota</taxon>
        <taxon>Caudoviricetes</taxon>
        <taxon>Herelleviridae</taxon>
        <taxon>Spounavirinae</taxon>
        <taxon>Okubovirus</taxon>
        <taxon>Okubovirus SPO1</taxon>
    </lineage>
</organism>
<name>GP59_BPSP1</name>
<gene>
    <name type="primary">59</name>
</gene>
<organismHost>
    <name type="scientific">Bacillus subtilis</name>
    <dbReference type="NCBI Taxonomy" id="1423"/>
</organismHost>
<dbReference type="EMBL" id="AF031901">
    <property type="protein sequence ID" value="AAC29028.1"/>
    <property type="molecule type" value="Genomic_DNA"/>
</dbReference>
<dbReference type="RefSeq" id="YP_002300305.1">
    <property type="nucleotide sequence ID" value="NC_011421.1"/>
</dbReference>
<dbReference type="GeneID" id="7009018"/>
<dbReference type="KEGG" id="vg:7009018"/>
<protein>
    <recommendedName>
        <fullName>Putative gene 59 protein</fullName>
    </recommendedName>
</protein>
<reference key="1">
    <citation type="journal article" date="1998" name="Virology">
        <title>Genes and regulatory sites of the 'host-takeover module' in the terminal redundancy of Bacillus subtilis bacteriophage SPO1.</title>
        <authorList>
            <person name="Stewart C.R."/>
            <person name="Gaslightwala I."/>
            <person name="Hinata K."/>
            <person name="Krolikowski K.A."/>
            <person name="Needleman D.S."/>
            <person name="Peng A.S.-Y."/>
            <person name="Peterman M.A."/>
            <person name="Tobias A."/>
            <person name="Wei P."/>
        </authorList>
    </citation>
    <scope>NUCLEOTIDE SEQUENCE [GENOMIC DNA]</scope>
</reference>
<feature type="chain" id="PRO_0000106165" description="Putative gene 59 protein">
    <location>
        <begin position="1"/>
        <end position="56"/>
    </location>
</feature>